<reference key="1">
    <citation type="journal article" date="1988" name="Cell">
        <title>Processing of a sporulation sigma factor in Bacillus subtilis: how morphological structure could control gene expression.</title>
        <authorList>
            <person name="Stragier P."/>
            <person name="Bonamy C."/>
            <person name="Karmazyn-Campelli C."/>
        </authorList>
    </citation>
    <scope>NUCLEOTIDE SEQUENCE [GENOMIC DNA]</scope>
    <scope>FUNCTION</scope>
    <source>
        <strain>168</strain>
    </source>
</reference>
<reference key="2">
    <citation type="journal article" date="1990" name="Nucleic Acids Res.">
        <title>Nucleotide sequence of the sporulation gene spoIIGA from Bacillus subtilis.</title>
        <authorList>
            <person name="Masuda E.S."/>
            <person name="Anaguchi H."/>
            <person name="Sato T."/>
            <person name="Takeuchi M."/>
            <person name="Kobayashi Y."/>
        </authorList>
    </citation>
    <scope>NUCLEOTIDE SEQUENCE [GENOMIC DNA]</scope>
    <source>
        <strain>168</strain>
    </source>
</reference>
<reference key="3">
    <citation type="journal article" date="1997" name="Nature">
        <title>The complete genome sequence of the Gram-positive bacterium Bacillus subtilis.</title>
        <authorList>
            <person name="Kunst F."/>
            <person name="Ogasawara N."/>
            <person name="Moszer I."/>
            <person name="Albertini A.M."/>
            <person name="Alloni G."/>
            <person name="Azevedo V."/>
            <person name="Bertero M.G."/>
            <person name="Bessieres P."/>
            <person name="Bolotin A."/>
            <person name="Borchert S."/>
            <person name="Borriss R."/>
            <person name="Boursier L."/>
            <person name="Brans A."/>
            <person name="Braun M."/>
            <person name="Brignell S.C."/>
            <person name="Bron S."/>
            <person name="Brouillet S."/>
            <person name="Bruschi C.V."/>
            <person name="Caldwell B."/>
            <person name="Capuano V."/>
            <person name="Carter N.M."/>
            <person name="Choi S.-K."/>
            <person name="Codani J.-J."/>
            <person name="Connerton I.F."/>
            <person name="Cummings N.J."/>
            <person name="Daniel R.A."/>
            <person name="Denizot F."/>
            <person name="Devine K.M."/>
            <person name="Duesterhoeft A."/>
            <person name="Ehrlich S.D."/>
            <person name="Emmerson P.T."/>
            <person name="Entian K.-D."/>
            <person name="Errington J."/>
            <person name="Fabret C."/>
            <person name="Ferrari E."/>
            <person name="Foulger D."/>
            <person name="Fritz C."/>
            <person name="Fujita M."/>
            <person name="Fujita Y."/>
            <person name="Fuma S."/>
            <person name="Galizzi A."/>
            <person name="Galleron N."/>
            <person name="Ghim S.-Y."/>
            <person name="Glaser P."/>
            <person name="Goffeau A."/>
            <person name="Golightly E.J."/>
            <person name="Grandi G."/>
            <person name="Guiseppi G."/>
            <person name="Guy B.J."/>
            <person name="Haga K."/>
            <person name="Haiech J."/>
            <person name="Harwood C.R."/>
            <person name="Henaut A."/>
            <person name="Hilbert H."/>
            <person name="Holsappel S."/>
            <person name="Hosono S."/>
            <person name="Hullo M.-F."/>
            <person name="Itaya M."/>
            <person name="Jones L.-M."/>
            <person name="Joris B."/>
            <person name="Karamata D."/>
            <person name="Kasahara Y."/>
            <person name="Klaerr-Blanchard M."/>
            <person name="Klein C."/>
            <person name="Kobayashi Y."/>
            <person name="Koetter P."/>
            <person name="Koningstein G."/>
            <person name="Krogh S."/>
            <person name="Kumano M."/>
            <person name="Kurita K."/>
            <person name="Lapidus A."/>
            <person name="Lardinois S."/>
            <person name="Lauber J."/>
            <person name="Lazarevic V."/>
            <person name="Lee S.-M."/>
            <person name="Levine A."/>
            <person name="Liu H."/>
            <person name="Masuda S."/>
            <person name="Mauel C."/>
            <person name="Medigue C."/>
            <person name="Medina N."/>
            <person name="Mellado R.P."/>
            <person name="Mizuno M."/>
            <person name="Moestl D."/>
            <person name="Nakai S."/>
            <person name="Noback M."/>
            <person name="Noone D."/>
            <person name="O'Reilly M."/>
            <person name="Ogawa K."/>
            <person name="Ogiwara A."/>
            <person name="Oudega B."/>
            <person name="Park S.-H."/>
            <person name="Parro V."/>
            <person name="Pohl T.M."/>
            <person name="Portetelle D."/>
            <person name="Porwollik S."/>
            <person name="Prescott A.M."/>
            <person name="Presecan E."/>
            <person name="Pujic P."/>
            <person name="Purnelle B."/>
            <person name="Rapoport G."/>
            <person name="Rey M."/>
            <person name="Reynolds S."/>
            <person name="Rieger M."/>
            <person name="Rivolta C."/>
            <person name="Rocha E."/>
            <person name="Roche B."/>
            <person name="Rose M."/>
            <person name="Sadaie Y."/>
            <person name="Sato T."/>
            <person name="Scanlan E."/>
            <person name="Schleich S."/>
            <person name="Schroeter R."/>
            <person name="Scoffone F."/>
            <person name="Sekiguchi J."/>
            <person name="Sekowska A."/>
            <person name="Seror S.J."/>
            <person name="Serror P."/>
            <person name="Shin B.-S."/>
            <person name="Soldo B."/>
            <person name="Sorokin A."/>
            <person name="Tacconi E."/>
            <person name="Takagi T."/>
            <person name="Takahashi H."/>
            <person name="Takemaru K."/>
            <person name="Takeuchi M."/>
            <person name="Tamakoshi A."/>
            <person name="Tanaka T."/>
            <person name="Terpstra P."/>
            <person name="Tognoni A."/>
            <person name="Tosato V."/>
            <person name="Uchiyama S."/>
            <person name="Vandenbol M."/>
            <person name="Vannier F."/>
            <person name="Vassarotti A."/>
            <person name="Viari A."/>
            <person name="Wambutt R."/>
            <person name="Wedler E."/>
            <person name="Wedler H."/>
            <person name="Weitzenegger T."/>
            <person name="Winters P."/>
            <person name="Wipat A."/>
            <person name="Yamamoto H."/>
            <person name="Yamane K."/>
            <person name="Yasumoto K."/>
            <person name="Yata K."/>
            <person name="Yoshida K."/>
            <person name="Yoshikawa H.-F."/>
            <person name="Zumstein E."/>
            <person name="Yoshikawa H."/>
            <person name="Danchin A."/>
        </authorList>
    </citation>
    <scope>NUCLEOTIDE SEQUENCE [LARGE SCALE GENOMIC DNA]</scope>
    <source>
        <strain>168</strain>
    </source>
</reference>
<reference key="4">
    <citation type="journal article" date="1991" name="J. Bacteriol.">
        <title>Synthesis and fractionation properties of SpoIIGA, a protein essential for pro-sigma E processing in Bacillus subtilis.</title>
        <authorList>
            <person name="Peters H.K. III"/>
            <person name="Haldenwang W.G."/>
        </authorList>
    </citation>
    <scope>FUNCTION</scope>
    <scope>SUBCELLULAR LOCATION</scope>
</reference>
<reference key="5">
    <citation type="journal article" date="1994" name="J. Bacteriol.">
        <title>Isolation of a Bacillus subtilis spoIIGA allele that suppresses processing-negative mutations in the Pro-sigma E gene (sigE).</title>
        <authorList>
            <person name="Peters H.K. III"/>
            <person name="Haldenwang W.G."/>
        </authorList>
    </citation>
    <scope>FUNCTION</scope>
    <scope>MUTAGENESIS OF PRO-259</scope>
</reference>
<reference key="6">
    <citation type="journal article" date="1995" name="Cell">
        <title>Extracellular signal protein triggering the proteolytic activation of a developmental transcription factor in B. subtilis.</title>
        <authorList>
            <person name="Hofmeister A.E."/>
            <person name="Londono-Vallejo A."/>
            <person name="Harry E."/>
            <person name="Stragier P."/>
            <person name="Losick R."/>
        </authorList>
    </citation>
    <scope>FUNCTION</scope>
</reference>
<reference key="7">
    <citation type="journal article" date="1998" name="J. Bacteriol.">
        <title>Activation of the proprotein transcription factor pro-sigmaE is associated with its progression through three patterns of subcellular localization during sporulation in Bacillus subtilis.</title>
        <authorList>
            <person name="Hofmeister A."/>
        </authorList>
    </citation>
    <scope>INTERACTION WITH SIGE</scope>
    <scope>DISRUPTION PHENOTYPE</scope>
</reference>
<reference key="8">
    <citation type="journal article" date="1998" name="Mol. Microbiol.">
        <title>The Bacillus SpoIIGA protein is targeted to sites of spore septum formation in a SpoIIE-independent manner.</title>
        <authorList>
            <person name="Fawcett P."/>
            <person name="Melnikov A."/>
            <person name="Youngman P."/>
        </authorList>
    </citation>
    <scope>SUBCELLULAR LOCATION</scope>
</reference>
<reference key="9">
    <citation type="journal article" date="2008" name="J. Biol. Chem.">
        <title>Evidence that the Bacillus subtilis SpoIIGA protein is a novel type of signal-transducing aspartic protease.</title>
        <authorList>
            <person name="Imamura D."/>
            <person name="Zhou R."/>
            <person name="Feig M."/>
            <person name="Kroos L."/>
        </authorList>
    </citation>
    <scope>FUNCTION</scope>
    <scope>INTERACTION WITH SPOIIR</scope>
    <scope>SUBUNIT</scope>
    <scope>SUBCELLULAR LOCATION</scope>
    <scope>ACTIVE SITE</scope>
    <scope>MUTAGENESIS OF ARG-164; VAL-165; HIS-177; GLY-180; LEU-181; ILE-182; ASP-183; SER-184; GLY-185; ASP-190; ASP-230; GLN-252; ASP-260; HIS-261; THR-282; THR-283; SER-286; ILE-294; ILE-295; HIS-296; LYS-298; 302-GLY--SER-309 AND HIS-307</scope>
</reference>
<reference key="10">
    <citation type="journal article" date="2011" name="J. Biochem.">
        <title>Substrate specificity of SpoIIGA, a signal-transducing aspartic protease in Bacilli.</title>
        <authorList>
            <person name="Imamura D."/>
            <person name="Kuwana R."/>
            <person name="Kroos L."/>
            <person name="Feig M."/>
            <person name="Takamatsu H."/>
            <person name="Watabe K."/>
        </authorList>
    </citation>
    <scope>FUNCTION</scope>
    <scope>MUTAGENESIS OF ASP-183; ARG-245; PRO-259 AND LYS-284</scope>
</reference>
<accession>P13801</accession>
<protein>
    <recommendedName>
        <fullName>Sporulation sigma-E factor-processing peptidase</fullName>
        <ecNumber>3.4.23.-</ecNumber>
    </recommendedName>
    <alternativeName>
        <fullName>Membrane-associated aspartic protease</fullName>
    </alternativeName>
    <alternativeName>
        <fullName>Stage II sporulation protein GA</fullName>
    </alternativeName>
</protein>
<organism>
    <name type="scientific">Bacillus subtilis (strain 168)</name>
    <dbReference type="NCBI Taxonomy" id="224308"/>
    <lineage>
        <taxon>Bacteria</taxon>
        <taxon>Bacillati</taxon>
        <taxon>Bacillota</taxon>
        <taxon>Bacilli</taxon>
        <taxon>Bacillales</taxon>
        <taxon>Bacillaceae</taxon>
        <taxon>Bacillus</taxon>
    </lineage>
</organism>
<feature type="chain" id="PRO_0000079179" description="Sporulation sigma-E factor-processing peptidase">
    <location>
        <begin position="1"/>
        <end position="309"/>
    </location>
</feature>
<feature type="transmembrane region" description="Helical" evidence="1">
    <location>
        <begin position="7"/>
        <end position="27"/>
    </location>
</feature>
<feature type="transmembrane region" description="Helical" evidence="1">
    <location>
        <begin position="36"/>
        <end position="55"/>
    </location>
</feature>
<feature type="transmembrane region" description="Helical" evidence="1">
    <location>
        <begin position="61"/>
        <end position="78"/>
    </location>
</feature>
<feature type="transmembrane region" description="Helical" evidence="1">
    <location>
        <begin position="88"/>
        <end position="105"/>
    </location>
</feature>
<feature type="transmembrane region" description="Helical" evidence="1">
    <location>
        <begin position="130"/>
        <end position="147"/>
    </location>
</feature>
<feature type="active site" evidence="11">
    <location>
        <position position="183"/>
    </location>
</feature>
<feature type="mutagenesis site" description="Abolishes cleavage of SigE I-17 mutant." evidence="3">
    <original>R</original>
    <variation>A</variation>
    <location>
        <position position="164"/>
    </location>
</feature>
<feature type="mutagenesis site" description="Unaffected cleavage of SigE I-17 mutant." evidence="3">
    <original>R</original>
    <variation>I</variation>
    <location>
        <position position="164"/>
    </location>
</feature>
<feature type="mutagenesis site" description="75% reduced cleavage of SigE I-17 mutant." evidence="3">
    <original>R</original>
    <variation>K</variation>
    <location>
        <position position="164"/>
    </location>
</feature>
<feature type="mutagenesis site" description="Abolishes cleavage of SigE I-17 mutant." evidence="3">
    <original>V</original>
    <variation>A</variation>
    <variation>P</variation>
    <location>
        <position position="165"/>
    </location>
</feature>
<feature type="mutagenesis site" description="Unaffected cleavage of SigE I-17 mutant." evidence="3">
    <original>H</original>
    <variation>A</variation>
    <location>
        <position position="177"/>
    </location>
</feature>
<feature type="mutagenesis site" description="70% reduced cleavage of SigE I-17 mutant." evidence="3">
    <original>G</original>
    <variation>A</variation>
    <location>
        <position position="180"/>
    </location>
</feature>
<feature type="mutagenesis site" description="Abolishes cleavage of SigE I-17 mutant." evidence="3">
    <original>G</original>
    <variation>D</variation>
    <location>
        <position position="180"/>
    </location>
</feature>
<feature type="mutagenesis site" description="Abolishes cleavage of SigE I-17 mutant." evidence="3">
    <original>L</original>
    <variation>A</variation>
    <location>
        <position position="181"/>
    </location>
</feature>
<feature type="mutagenesis site" description="Abolishes cleavage of SigE I-17 mutant." evidence="3">
    <original>I</original>
    <variation>A</variation>
    <variation>D</variation>
    <location>
        <position position="182"/>
    </location>
</feature>
<feature type="mutagenesis site" description="Abolishes cleavage of wild-type SigE. Abolishes cleavage of SigE I-17 mutant." evidence="3 4">
    <original>D</original>
    <variation>A</variation>
    <location>
        <position position="183"/>
    </location>
</feature>
<feature type="mutagenesis site" description="Abolishes cleavage of SigE I-17 mutant." evidence="3 4">
    <original>D</original>
    <variation>E</variation>
    <variation>N</variation>
    <location>
        <position position="183"/>
    </location>
</feature>
<feature type="mutagenesis site" description="Abolishes cleavage of SigE I-17 mutant." evidence="3">
    <original>S</original>
    <variation>A</variation>
    <location>
        <position position="184"/>
    </location>
</feature>
<feature type="mutagenesis site" description="2-fold reduced cleavage of SigE I-17 mutant." evidence="3">
    <original>S</original>
    <variation>C</variation>
    <location>
        <position position="184"/>
    </location>
</feature>
<feature type="mutagenesis site" description="Unaffected cleavage of SigE I-17 mutant." evidence="3">
    <original>S</original>
    <variation>T</variation>
    <location>
        <position position="184"/>
    </location>
</feature>
<feature type="mutagenesis site" description="60% reduced cleavage of SigE I-17 mutant." evidence="3">
    <original>G</original>
    <variation>A</variation>
    <location>
        <position position="185"/>
    </location>
</feature>
<feature type="mutagenesis site" description="Abolishes cleavage of SigE I-17 mutant." evidence="3">
    <original>G</original>
    <variation>V</variation>
    <location>
        <position position="185"/>
    </location>
</feature>
<feature type="mutagenesis site" description="2-fold reduced cleavage of SigE I-17 mutant." evidence="3">
    <original>D</original>
    <variation>E</variation>
    <location>
        <position position="190"/>
    </location>
</feature>
<feature type="mutagenesis site" description="2-fold reduced cleavage of SigE I-17 mutant." evidence="3">
    <original>D</original>
    <variation>E</variation>
    <location>
        <position position="230"/>
    </location>
</feature>
<feature type="mutagenesis site" description="Abolishes cleavage of SigE." evidence="4">
    <original>R</original>
    <variation>D</variation>
    <location>
        <position position="245"/>
    </location>
</feature>
<feature type="mutagenesis site" description="60% reduced cleavage of SigE I-17 mutant." evidence="3">
    <original>Q</original>
    <variation>E</variation>
    <location>
        <position position="252"/>
    </location>
</feature>
<feature type="mutagenesis site" description="Unaffected cleavage of wild-type and K-25 mutant SigE in sporulating B.subtilis cells (PubMed:8002606). Abolishes cleavage of wild-type and K-25 mutant SigE when proteins are coexpressed in E.coli cells (PubMed:21362630)." evidence="4 7">
    <original>P</original>
    <variation>L</variation>
    <location>
        <position position="259"/>
    </location>
</feature>
<feature type="mutagenesis site" description="Abolishes cleavage of SigE I-17 mutant." evidence="3">
    <original>D</original>
    <variation>A</variation>
    <location>
        <position position="260"/>
    </location>
</feature>
<feature type="mutagenesis site" description="2-fold reduced cleavage of SigE I-17 mutant." evidence="3">
    <original>D</original>
    <variation>E</variation>
    <location>
        <position position="260"/>
    </location>
</feature>
<feature type="mutagenesis site" description="Unaffected cleavage of SigE I-17 mutant." evidence="3">
    <original>H</original>
    <variation>A</variation>
    <variation>S</variation>
    <location>
        <position position="261"/>
    </location>
</feature>
<feature type="mutagenesis site" description="Abolishes cleavage of SigE I-17 mutant." evidence="3">
    <original>T</original>
    <variation>E</variation>
    <location>
        <position position="282"/>
    </location>
</feature>
<feature type="mutagenesis site" description="Nearly unaffected cleavage of SigE I-17 mutant." evidence="3">
    <original>T</original>
    <variation>A</variation>
    <location>
        <position position="283"/>
    </location>
</feature>
<feature type="mutagenesis site" description="Reduced cleavage of SigE." evidence="4">
    <original>K</original>
    <variation>D</variation>
    <location>
        <position position="284"/>
    </location>
</feature>
<feature type="mutagenesis site" description="80% reduced cleavage of SigE I-17 mutant." evidence="3">
    <original>S</original>
    <variation>A</variation>
    <location>
        <position position="286"/>
    </location>
</feature>
<feature type="mutagenesis site" description="Abolishes cleavage of SigE I-17 mutant." evidence="3">
    <original>I</original>
    <variation>A</variation>
    <location>
        <position position="294"/>
    </location>
</feature>
<feature type="mutagenesis site" description="Abolishes cleavage of SigE I-17 mutant." evidence="3">
    <original>I</original>
    <variation>A</variation>
    <location>
        <position position="295"/>
    </location>
</feature>
<feature type="mutagenesis site" description="Abolishes cleavage of SigE I-17 mutant." evidence="3">
    <original>H</original>
    <variation>A</variation>
    <variation>E</variation>
    <variation>F</variation>
    <variation>G</variation>
    <variation>I</variation>
    <variation>Q</variation>
    <variation>S</variation>
    <location>
        <position position="296"/>
    </location>
</feature>
<feature type="mutagenesis site" description="Abolishes cleavage of SigE I-17 mutant; when associated with N-298." evidence="3">
    <original>H</original>
    <variation>G</variation>
    <location>
        <position position="296"/>
    </location>
</feature>
<feature type="mutagenesis site" description="Unaffected cleavage of SigE I-17 mutant." evidence="3">
    <original>K</original>
    <variation>A</variation>
    <location>
        <position position="298"/>
    </location>
</feature>
<feature type="mutagenesis site" description="80% reduced cleavage of SigE I-17 mutant. Abolishes cleavage of SigE I-17 mutant; when associated with G-296." evidence="3">
    <original>K</original>
    <variation>N</variation>
    <location>
        <position position="298"/>
    </location>
</feature>
<feature type="mutagenesis site" description="Abolishes cleavage of SigE I-17 mutant." evidence="3">
    <location>
        <begin position="302"/>
        <end position="309"/>
    </location>
</feature>
<feature type="mutagenesis site" description="Unaffected cleavage of SigE I-17 mutant." evidence="3">
    <original>H</original>
    <variation>A</variation>
    <location>
        <position position="307"/>
    </location>
</feature>
<dbReference type="EC" id="3.4.23.-"/>
<dbReference type="EMBL" id="X17344">
    <property type="protein sequence ID" value="CAA35225.1"/>
    <property type="molecule type" value="Genomic_DNA"/>
</dbReference>
<dbReference type="EMBL" id="AL009126">
    <property type="protein sequence ID" value="CAB13405.1"/>
    <property type="molecule type" value="Genomic_DNA"/>
</dbReference>
<dbReference type="PIR" id="S08224">
    <property type="entry name" value="A29812"/>
</dbReference>
<dbReference type="RefSeq" id="NP_389414.1">
    <property type="nucleotide sequence ID" value="NC_000964.3"/>
</dbReference>
<dbReference type="RefSeq" id="WP_003232163.1">
    <property type="nucleotide sequence ID" value="NZ_OZ025638.1"/>
</dbReference>
<dbReference type="FunCoup" id="P13801">
    <property type="interactions" value="68"/>
</dbReference>
<dbReference type="STRING" id="224308.BSU15310"/>
<dbReference type="MEROPS" id="A36.001"/>
<dbReference type="PaxDb" id="224308-BSU15310"/>
<dbReference type="DNASU" id="939984"/>
<dbReference type="EnsemblBacteria" id="CAB13405">
    <property type="protein sequence ID" value="CAB13405"/>
    <property type="gene ID" value="BSU_15310"/>
</dbReference>
<dbReference type="GeneID" id="939984"/>
<dbReference type="KEGG" id="bsu:BSU15310"/>
<dbReference type="PATRIC" id="fig|224308.179.peg.1669"/>
<dbReference type="eggNOG" id="ENOG50301AF">
    <property type="taxonomic scope" value="Bacteria"/>
</dbReference>
<dbReference type="InParanoid" id="P13801"/>
<dbReference type="OrthoDB" id="2690199at2"/>
<dbReference type="BioCyc" id="BSUB:BSU15310-MONOMER"/>
<dbReference type="Proteomes" id="UP000001570">
    <property type="component" value="Chromosome"/>
</dbReference>
<dbReference type="GO" id="GO:0005886">
    <property type="term" value="C:plasma membrane"/>
    <property type="evidence" value="ECO:0000314"/>
    <property type="project" value="UniProtKB"/>
</dbReference>
<dbReference type="GO" id="GO:0004190">
    <property type="term" value="F:aspartic-type endopeptidase activity"/>
    <property type="evidence" value="ECO:0000315"/>
    <property type="project" value="UniProtKB"/>
</dbReference>
<dbReference type="GO" id="GO:0008233">
    <property type="term" value="F:peptidase activity"/>
    <property type="evidence" value="ECO:0000315"/>
    <property type="project" value="UniProtKB"/>
</dbReference>
<dbReference type="GO" id="GO:0030436">
    <property type="term" value="P:asexual sporulation"/>
    <property type="evidence" value="ECO:0007669"/>
    <property type="project" value="InterPro"/>
</dbReference>
<dbReference type="GO" id="GO:0006508">
    <property type="term" value="P:proteolysis"/>
    <property type="evidence" value="ECO:0000315"/>
    <property type="project" value="UniProtKB"/>
</dbReference>
<dbReference type="GO" id="GO:0030435">
    <property type="term" value="P:sporulation resulting in formation of a cellular spore"/>
    <property type="evidence" value="ECO:0007669"/>
    <property type="project" value="UniProtKB-KW"/>
</dbReference>
<dbReference type="InterPro" id="IPR005081">
    <property type="entry name" value="SpoIIGA"/>
</dbReference>
<dbReference type="NCBIfam" id="TIGR02854">
    <property type="entry name" value="spore_II_GA"/>
    <property type="match status" value="1"/>
</dbReference>
<dbReference type="Pfam" id="PF03419">
    <property type="entry name" value="Peptidase_U4"/>
    <property type="match status" value="1"/>
</dbReference>
<dbReference type="PIRSF" id="PIRSF018571">
    <property type="entry name" value="SpoIIGA"/>
    <property type="match status" value="1"/>
</dbReference>
<gene>
    <name type="primary">spoIIGA</name>
    <name type="ordered locus">BSU15310</name>
</gene>
<evidence type="ECO:0000255" key="1"/>
<evidence type="ECO:0000269" key="2">
    <source>
    </source>
</evidence>
<evidence type="ECO:0000269" key="3">
    <source>
    </source>
</evidence>
<evidence type="ECO:0000269" key="4">
    <source>
    </source>
</evidence>
<evidence type="ECO:0000269" key="5">
    <source>
    </source>
</evidence>
<evidence type="ECO:0000269" key="6">
    <source>
    </source>
</evidence>
<evidence type="ECO:0000269" key="7">
    <source>
    </source>
</evidence>
<evidence type="ECO:0000269" key="8">
    <source>
    </source>
</evidence>
<evidence type="ECO:0000269" key="9">
    <source>
    </source>
</evidence>
<evidence type="ECO:0000305" key="10"/>
<evidence type="ECO:0000305" key="11">
    <source>
    </source>
</evidence>
<comment type="function">
    <text evidence="2 3 4 5 6 7">Probable aspartic protease that is responsible for the proteolytic cleavage of the RNA polymerase sigma E factor (SigE/spoIIGB) to yield the active peptide in the mother cell during sporulation. Responds to a signal from the forespore that is triggered by the extracellular signal protein SpoIIR.</text>
</comment>
<comment type="subunit">
    <text evidence="3 8 10">Self-associates. Interacts with SigE (Probable). Interacts with SpoIIR.</text>
</comment>
<comment type="subcellular location">
    <subcellularLocation>
        <location evidence="2 3 9">Cell membrane</location>
        <topology evidence="2 3 9">Multi-pass membrane protein</topology>
    </subcellularLocation>
    <text>Localized to the sporulation septum.</text>
</comment>
<comment type="disruption phenotype">
    <text evidence="8">Does not affect the localization of SigE.</text>
</comment>
<comment type="similarity">
    <text evidence="10">Belongs to the peptidase U4 family.</text>
</comment>
<sequence>MKIYLDVIWLLNFCFDALLLLLTAFILKRHVKKRRLVGGAFIGSSIVLLMFTPFSPIVEHPAGKLAFSVVIVVVTFGFKRFRFFFQNLFSFYFATFLMGGGIIGAHSLLQSNSIVQNGVMITNQTGFGDPISWLFIVGGFPALWFFSKRRIEDIETKNIQYEERVSVQADLGSQTLHVRGLIDSGNQLYDPLTKTPVMIIYIDKLEPIFGTAETMIIRNTDPLEAIEQLDDSFRFLDKMRLIPYRGVGQQNQFLLCVKPDHVTIMTKEEMISADKCLIGISTTKLSADGEFDAIIHPKMLSGKAVKHVS</sequence>
<proteinExistence type="evidence at protein level"/>
<name>SP2G_BACSU</name>
<keyword id="KW-0064">Aspartyl protease</keyword>
<keyword id="KW-1003">Cell membrane</keyword>
<keyword id="KW-0378">Hydrolase</keyword>
<keyword id="KW-0472">Membrane</keyword>
<keyword id="KW-0645">Protease</keyword>
<keyword id="KW-1185">Reference proteome</keyword>
<keyword id="KW-0749">Sporulation</keyword>
<keyword id="KW-0812">Transmembrane</keyword>
<keyword id="KW-1133">Transmembrane helix</keyword>